<sequence>MLTRNCLSLLLWVLFDGGLLTPLQPQPQQTLATEPRENVIHLPGQRSHFQRVKRGWVWNQFFVLEEYVGSEPQYVGKLHSDLDKGEGTVKYTLSGDGAGTVFTIDETTGDIHAIRSLDREEKPFYTLRAQAVDIETRKPLEPESEFIIKVQDINDNEPKFLDGPYVATVPEMSPVGAYVLQVKATDADDPTYGNSARVVYSILQGQPYFSIDPKTGVIRTALPNMDREVKEQYQVLIQAKDMGGQLGGLAGTTIVNITLTDVNDNPPRFPKSIFHLKVPESSPIGSAIGRIRAVDPDFGQNAEIEYNIVPGDGGNLFDIVTDEDTQEGVIKLKKPLDFETKKAYTFKVEASNLHLDHRFHSAGPFKDTATVKISVLDVDEPPVFSKPLYTMEVYEDTPVGTIIGAVTAQDLDVGSSAVRYFIDWKSDGDSYFTIDGNEGTIATNELLDRESTAQYNFSIIASKVSNPLLTSKVNILINVLDVNEFPPEISVPYETAVCENAKPGQIIQIVSAADRDLSPAGQQFSFRLSPEAAIKPNFTVRDFRNNTAGIETRRNGYSRRQQELYFLPVVIEDSSYPVQSSTNTMTIRVCRCDSDGTILSCNVEAIFLPVGLSTGALIAILLCIVILLAIVVLYVALRRQKKKDTLMTSKEDIRDNVIHYDDEGGGEEDTQAFDIGALRNPKVIEENKIRRDIKPDSLCLPRQRPPMEDNTDIRDFIHQRLQENDVDPTAPPYDSLATYAYEGSGSVAESLSSIDSLTTEADQDYDYLTDWGPRFKVLADMFGEEESYNPDKVT</sequence>
<accession>P55289</accession>
<accession>B2RBT1</accession>
<accession>B7Z2U6</accession>
<accession>Q86UD2</accession>
<comment type="function">
    <text>Cadherins are calcium-dependent cell adhesion proteins. They preferentially interact with themselves in a homophilic manner in connecting cells; cadherins may thus contribute to the sorting of heterogeneous cell types.</text>
</comment>
<comment type="subcellular location">
    <subcellularLocation>
        <location>Cell membrane</location>
        <topology>Single-pass type I membrane protein</topology>
    </subcellularLocation>
</comment>
<comment type="alternative products">
    <event type="alternative splicing"/>
    <isoform>
        <id>P55289-1</id>
        <name>1</name>
        <sequence type="displayed"/>
    </isoform>
    <isoform>
        <id>P55289-2</id>
        <name>2</name>
        <sequence type="described" ref="VSP_056449"/>
    </isoform>
</comment>
<comment type="tissue specificity">
    <text>Brain.</text>
</comment>
<comment type="domain">
    <text evidence="1">Three calcium ions are usually bound at the interface of each cadherin domain and rigidify the connections, imparting a strong curvature to the full-length ectodomain.</text>
</comment>
<feature type="signal peptide" evidence="3">
    <location>
        <begin position="1"/>
        <end position="23"/>
    </location>
</feature>
<feature type="propeptide" id="PRO_0000003791" evidence="3">
    <location>
        <begin position="24"/>
        <end position="54"/>
    </location>
</feature>
<feature type="chain" id="PRO_0000003792" description="Cadherin-12">
    <location>
        <begin position="55"/>
        <end position="794"/>
    </location>
</feature>
<feature type="topological domain" description="Extracellular" evidence="3">
    <location>
        <begin position="55"/>
        <end position="609"/>
    </location>
</feature>
<feature type="transmembrane region" description="Helical" evidence="3">
    <location>
        <begin position="610"/>
        <end position="637"/>
    </location>
</feature>
<feature type="topological domain" description="Cytoplasmic" evidence="3">
    <location>
        <begin position="638"/>
        <end position="794"/>
    </location>
</feature>
<feature type="domain" description="Cadherin 1" evidence="4">
    <location>
        <begin position="55"/>
        <end position="160"/>
    </location>
</feature>
<feature type="domain" description="Cadherin 2" evidence="4">
    <location>
        <begin position="161"/>
        <end position="269"/>
    </location>
</feature>
<feature type="domain" description="Cadherin 3" evidence="4">
    <location>
        <begin position="270"/>
        <end position="384"/>
    </location>
</feature>
<feature type="domain" description="Cadherin 4" evidence="4">
    <location>
        <begin position="385"/>
        <end position="487"/>
    </location>
</feature>
<feature type="domain" description="Cadherin 5" evidence="4">
    <location>
        <begin position="488"/>
        <end position="609"/>
    </location>
</feature>
<feature type="modified residue" description="Phosphoserine" evidence="2">
    <location>
        <position position="787"/>
    </location>
</feature>
<feature type="glycosylation site" description="N-linked (GlcNAc...) asparagine" evidence="3">
    <location>
        <position position="256"/>
    </location>
</feature>
<feature type="glycosylation site" description="N-linked (GlcNAc...) asparagine" evidence="3">
    <location>
        <position position="456"/>
    </location>
</feature>
<feature type="glycosylation site" description="N-linked (GlcNAc...) asparagine" evidence="3">
    <location>
        <position position="537"/>
    </location>
</feature>
<feature type="glycosylation site" description="N-linked (GlcNAc...) asparagine" evidence="3">
    <location>
        <position position="545"/>
    </location>
</feature>
<feature type="splice variant" id="VSP_056449" description="In isoform 2." evidence="6">
    <location>
        <begin position="176"/>
        <end position="215"/>
    </location>
</feature>
<feature type="sequence variant" id="VAR_048505" description="In dbSNP:rs4371716." evidence="5">
    <original>V</original>
    <variation>M</variation>
    <location>
        <position position="68"/>
    </location>
</feature>
<feature type="sequence variant" id="VAR_048506" description="In dbSNP:rs17328673.">
    <original>I</original>
    <variation>V</variation>
    <location>
        <position position="284"/>
    </location>
</feature>
<feature type="sequence variant" id="VAR_048507" description="In dbSNP:rs12108814.">
    <original>I</original>
    <variation>T</variation>
    <location>
        <position position="475"/>
    </location>
</feature>
<feature type="sequence conflict" description="In Ref. 2; AAB48539." evidence="7" ref="2">
    <original>E</original>
    <variation>D</variation>
    <location>
        <position position="349"/>
    </location>
</feature>
<feature type="sequence conflict" description="In Ref. 1; AAA35623." evidence="7" ref="1">
    <original>S</original>
    <variation>G</variation>
    <location>
        <position position="416"/>
    </location>
</feature>
<feature type="sequence conflict" description="In Ref. 1; AAA35623." evidence="7" ref="1">
    <original>D</original>
    <variation>H</variation>
    <location>
        <position position="644"/>
    </location>
</feature>
<feature type="sequence conflict" description="In Ref. 1; AAA35623." evidence="7" ref="1">
    <original>Y</original>
    <variation>I</variation>
    <location>
        <position position="733"/>
    </location>
</feature>
<feature type="sequence conflict" description="In Ref. 2; AAB48539." evidence="7" ref="2">
    <original>A</original>
    <variation>T</variation>
    <location>
        <position position="761"/>
    </location>
</feature>
<proteinExistence type="evidence at protein level"/>
<protein>
    <recommendedName>
        <fullName>Cadherin-12</fullName>
    </recommendedName>
    <alternativeName>
        <fullName>Brain cadherin</fullName>
        <shortName>BR-cadherin</shortName>
    </alternativeName>
    <alternativeName>
        <fullName>Neural type cadherin 2</fullName>
        <shortName>N-cadherin 2</shortName>
    </alternativeName>
</protein>
<dbReference type="EMBL" id="L34057">
    <property type="protein sequence ID" value="AAA35623.1"/>
    <property type="molecule type" value="mRNA"/>
</dbReference>
<dbReference type="EMBL" id="L33477">
    <property type="protein sequence ID" value="AAB48539.1"/>
    <property type="molecule type" value="mRNA"/>
</dbReference>
<dbReference type="EMBL" id="AK295123">
    <property type="protein sequence ID" value="BAH11982.1"/>
    <property type="molecule type" value="mRNA"/>
</dbReference>
<dbReference type="EMBL" id="AK314800">
    <property type="protein sequence ID" value="BAG37328.1"/>
    <property type="molecule type" value="mRNA"/>
</dbReference>
<dbReference type="EMBL" id="AC022139">
    <property type="status" value="NOT_ANNOTATED_CDS"/>
    <property type="molecule type" value="Genomic_DNA"/>
</dbReference>
<dbReference type="EMBL" id="AC026716">
    <property type="status" value="NOT_ANNOTATED_CDS"/>
    <property type="molecule type" value="Genomic_DNA"/>
</dbReference>
<dbReference type="EMBL" id="AC034239">
    <property type="status" value="NOT_ANNOTATED_CDS"/>
    <property type="molecule type" value="Genomic_DNA"/>
</dbReference>
<dbReference type="EMBL" id="AC091938">
    <property type="status" value="NOT_ANNOTATED_CDS"/>
    <property type="molecule type" value="Genomic_DNA"/>
</dbReference>
<dbReference type="EMBL" id="AC093263">
    <property type="status" value="NOT_ANNOTATED_CDS"/>
    <property type="molecule type" value="Genomic_DNA"/>
</dbReference>
<dbReference type="EMBL" id="AC108089">
    <property type="status" value="NOT_ANNOTATED_CDS"/>
    <property type="molecule type" value="Genomic_DNA"/>
</dbReference>
<dbReference type="EMBL" id="AC109455">
    <property type="status" value="NOT_ANNOTATED_CDS"/>
    <property type="molecule type" value="Genomic_DNA"/>
</dbReference>
<dbReference type="EMBL" id="AC138854">
    <property type="status" value="NOT_ANNOTATED_CDS"/>
    <property type="molecule type" value="Genomic_DNA"/>
</dbReference>
<dbReference type="EMBL" id="AC138940">
    <property type="status" value="NOT_ANNOTATED_CDS"/>
    <property type="molecule type" value="Genomic_DNA"/>
</dbReference>
<dbReference type="EMBL" id="AC139497">
    <property type="status" value="NOT_ANNOTATED_CDS"/>
    <property type="molecule type" value="Genomic_DNA"/>
</dbReference>
<dbReference type="EMBL" id="AC140132">
    <property type="status" value="NOT_ANNOTATED_CDS"/>
    <property type="molecule type" value="Genomic_DNA"/>
</dbReference>
<dbReference type="EMBL" id="AC140171">
    <property type="status" value="NOT_ANNOTATED_CDS"/>
    <property type="molecule type" value="Genomic_DNA"/>
</dbReference>
<dbReference type="EMBL" id="CH471118">
    <property type="protein sequence ID" value="EAX10736.1"/>
    <property type="molecule type" value="Genomic_DNA"/>
</dbReference>
<dbReference type="EMBL" id="BC047608">
    <property type="protein sequence ID" value="AAH47608.1"/>
    <property type="molecule type" value="mRNA"/>
</dbReference>
<dbReference type="CCDS" id="CCDS3890.1">
    <molecule id="P55289-1"/>
</dbReference>
<dbReference type="CCDS" id="CCDS82991.1">
    <molecule id="P55289-2"/>
</dbReference>
<dbReference type="PIR" id="I59372">
    <property type="entry name" value="I59372"/>
</dbReference>
<dbReference type="RefSeq" id="NP_001304156.1">
    <molecule id="P55289-1"/>
    <property type="nucleotide sequence ID" value="NM_001317227.2"/>
</dbReference>
<dbReference type="RefSeq" id="NP_001304157.1">
    <molecule id="P55289-2"/>
    <property type="nucleotide sequence ID" value="NM_001317228.1"/>
</dbReference>
<dbReference type="RefSeq" id="NP_001351033.1">
    <molecule id="P55289-1"/>
    <property type="nucleotide sequence ID" value="NM_001364104.2"/>
</dbReference>
<dbReference type="RefSeq" id="NP_001351034.1">
    <molecule id="P55289-1"/>
    <property type="nucleotide sequence ID" value="NM_001364105.2"/>
</dbReference>
<dbReference type="RefSeq" id="NP_001351035.1">
    <molecule id="P55289-1"/>
    <property type="nucleotide sequence ID" value="NM_001364106.2"/>
</dbReference>
<dbReference type="RefSeq" id="NP_001351036.1">
    <molecule id="P55289-1"/>
    <property type="nucleotide sequence ID" value="NM_001364107.2"/>
</dbReference>
<dbReference type="RefSeq" id="NP_001351037.1">
    <molecule id="P55289-1"/>
    <property type="nucleotide sequence ID" value="NM_001364108.2"/>
</dbReference>
<dbReference type="RefSeq" id="NP_004052.2">
    <molecule id="P55289-1"/>
    <property type="nucleotide sequence ID" value="NM_004061.4"/>
</dbReference>
<dbReference type="RefSeq" id="XP_011512229.1">
    <property type="nucleotide sequence ID" value="XM_011513927.2"/>
</dbReference>
<dbReference type="RefSeq" id="XP_016864409.1">
    <property type="nucleotide sequence ID" value="XM_017008920.1"/>
</dbReference>
<dbReference type="RefSeq" id="XP_016864410.1">
    <property type="nucleotide sequence ID" value="XM_017008921.1"/>
</dbReference>
<dbReference type="RefSeq" id="XP_047272558.1">
    <molecule id="P55289-1"/>
    <property type="nucleotide sequence ID" value="XM_047416602.1"/>
</dbReference>
<dbReference type="RefSeq" id="XP_054207360.1">
    <molecule id="P55289-1"/>
    <property type="nucleotide sequence ID" value="XM_054351385.1"/>
</dbReference>
<dbReference type="SMR" id="P55289"/>
<dbReference type="BioGRID" id="107445">
    <property type="interactions" value="15"/>
</dbReference>
<dbReference type="FunCoup" id="P55289">
    <property type="interactions" value="272"/>
</dbReference>
<dbReference type="IntAct" id="P55289">
    <property type="interactions" value="15"/>
</dbReference>
<dbReference type="STRING" id="9606.ENSP00000371689"/>
<dbReference type="GlyCosmos" id="P55289">
    <property type="glycosylation" value="4 sites, No reported glycans"/>
</dbReference>
<dbReference type="GlyGen" id="P55289">
    <property type="glycosylation" value="5 sites, 2 N-linked glycans (2 sites)"/>
</dbReference>
<dbReference type="iPTMnet" id="P55289"/>
<dbReference type="PhosphoSitePlus" id="P55289"/>
<dbReference type="BioMuta" id="CDH12"/>
<dbReference type="DMDM" id="158937438"/>
<dbReference type="MassIVE" id="P55289"/>
<dbReference type="PaxDb" id="9606-ENSP00000371689"/>
<dbReference type="PeptideAtlas" id="P55289"/>
<dbReference type="ProteomicsDB" id="56839">
    <molecule id="P55289-1"/>
</dbReference>
<dbReference type="ProteomicsDB" id="6465"/>
<dbReference type="TopDownProteomics" id="P55289-2">
    <molecule id="P55289-2"/>
</dbReference>
<dbReference type="Antibodypedia" id="22634">
    <property type="antibodies" value="274 antibodies from 28 providers"/>
</dbReference>
<dbReference type="DNASU" id="1010"/>
<dbReference type="Ensembl" id="ENST00000382254.6">
    <molecule id="P55289-1"/>
    <property type="protein sequence ID" value="ENSP00000371689.1"/>
    <property type="gene ID" value="ENSG00000154162.15"/>
</dbReference>
<dbReference type="Ensembl" id="ENST00000504376.6">
    <molecule id="P55289-1"/>
    <property type="protein sequence ID" value="ENSP00000423577.1"/>
    <property type="gene ID" value="ENSG00000154162.15"/>
</dbReference>
<dbReference type="Ensembl" id="ENST00000522262.1">
    <molecule id="P55289-2"/>
    <property type="protein sequence ID" value="ENSP00000428786.1"/>
    <property type="gene ID" value="ENSG00000154162.15"/>
</dbReference>
<dbReference type="GeneID" id="1010"/>
<dbReference type="KEGG" id="hsa:1010"/>
<dbReference type="MANE-Select" id="ENST00000382254.6">
    <property type="protein sequence ID" value="ENSP00000371689.1"/>
    <property type="RefSeq nucleotide sequence ID" value="NM_004061.5"/>
    <property type="RefSeq protein sequence ID" value="NP_004052.2"/>
</dbReference>
<dbReference type="UCSC" id="uc003jgk.3">
    <molecule id="P55289-1"/>
    <property type="organism name" value="human"/>
</dbReference>
<dbReference type="AGR" id="HGNC:1751"/>
<dbReference type="CTD" id="1010"/>
<dbReference type="DisGeNET" id="1010"/>
<dbReference type="GeneCards" id="CDH12"/>
<dbReference type="HGNC" id="HGNC:1751">
    <property type="gene designation" value="CDH12"/>
</dbReference>
<dbReference type="HPA" id="ENSG00000154162">
    <property type="expression patterns" value="Tissue enhanced (retina)"/>
</dbReference>
<dbReference type="MIM" id="600562">
    <property type="type" value="gene"/>
</dbReference>
<dbReference type="neXtProt" id="NX_P55289"/>
<dbReference type="OpenTargets" id="ENSG00000154162"/>
<dbReference type="PharmGKB" id="PA26285"/>
<dbReference type="VEuPathDB" id="HostDB:ENSG00000154162"/>
<dbReference type="eggNOG" id="KOG3594">
    <property type="taxonomic scope" value="Eukaryota"/>
</dbReference>
<dbReference type="GeneTree" id="ENSGT00940000154187"/>
<dbReference type="HOGENOM" id="CLU_005284_3_1_1"/>
<dbReference type="InParanoid" id="P55289"/>
<dbReference type="OMA" id="FTRHRPP"/>
<dbReference type="OrthoDB" id="6252479at2759"/>
<dbReference type="PAN-GO" id="P55289">
    <property type="GO annotations" value="9 GO annotations based on evolutionary models"/>
</dbReference>
<dbReference type="PhylomeDB" id="P55289"/>
<dbReference type="TreeFam" id="TF329887"/>
<dbReference type="PathwayCommons" id="P55289"/>
<dbReference type="Reactome" id="R-HSA-418990">
    <property type="pathway name" value="Adherens junctions interactions"/>
</dbReference>
<dbReference type="SignaLink" id="P55289"/>
<dbReference type="SIGNOR" id="P55289"/>
<dbReference type="BioGRID-ORCS" id="1010">
    <property type="hits" value="9 hits in 1149 CRISPR screens"/>
</dbReference>
<dbReference type="ChiTaRS" id="CDH12">
    <property type="organism name" value="human"/>
</dbReference>
<dbReference type="GeneWiki" id="CDH12"/>
<dbReference type="GenomeRNAi" id="1010"/>
<dbReference type="Pharos" id="P55289">
    <property type="development level" value="Tbio"/>
</dbReference>
<dbReference type="PRO" id="PR:P55289"/>
<dbReference type="Proteomes" id="UP000005640">
    <property type="component" value="Chromosome 5"/>
</dbReference>
<dbReference type="RNAct" id="P55289">
    <property type="molecule type" value="protein"/>
</dbReference>
<dbReference type="Bgee" id="ENSG00000154162">
    <property type="expression patterns" value="Expressed in male germ line stem cell (sensu Vertebrata) in testis and 93 other cell types or tissues"/>
</dbReference>
<dbReference type="GO" id="GO:0005912">
    <property type="term" value="C:adherens junction"/>
    <property type="evidence" value="ECO:0000318"/>
    <property type="project" value="GO_Central"/>
</dbReference>
<dbReference type="GO" id="GO:0016342">
    <property type="term" value="C:catenin complex"/>
    <property type="evidence" value="ECO:0000318"/>
    <property type="project" value="GO_Central"/>
</dbReference>
<dbReference type="GO" id="GO:0005886">
    <property type="term" value="C:plasma membrane"/>
    <property type="evidence" value="ECO:0000304"/>
    <property type="project" value="Reactome"/>
</dbReference>
<dbReference type="GO" id="GO:0008013">
    <property type="term" value="F:beta-catenin binding"/>
    <property type="evidence" value="ECO:0000318"/>
    <property type="project" value="GO_Central"/>
</dbReference>
<dbReference type="GO" id="GO:0045296">
    <property type="term" value="F:cadherin binding"/>
    <property type="evidence" value="ECO:0000318"/>
    <property type="project" value="GO_Central"/>
</dbReference>
<dbReference type="GO" id="GO:0005509">
    <property type="term" value="F:calcium ion binding"/>
    <property type="evidence" value="ECO:0007669"/>
    <property type="project" value="InterPro"/>
</dbReference>
<dbReference type="GO" id="GO:0034332">
    <property type="term" value="P:adherens junction organization"/>
    <property type="evidence" value="ECO:0000318"/>
    <property type="project" value="GO_Central"/>
</dbReference>
<dbReference type="GO" id="GO:0016339">
    <property type="term" value="P:calcium-dependent cell-cell adhesion via plasma membrane cell adhesion molecules"/>
    <property type="evidence" value="ECO:0000318"/>
    <property type="project" value="GO_Central"/>
</dbReference>
<dbReference type="GO" id="GO:0016477">
    <property type="term" value="P:cell migration"/>
    <property type="evidence" value="ECO:0000318"/>
    <property type="project" value="GO_Central"/>
</dbReference>
<dbReference type="GO" id="GO:0000902">
    <property type="term" value="P:cell morphogenesis"/>
    <property type="evidence" value="ECO:0000318"/>
    <property type="project" value="GO_Central"/>
</dbReference>
<dbReference type="GO" id="GO:0044331">
    <property type="term" value="P:cell-cell adhesion mediated by cadherin"/>
    <property type="evidence" value="ECO:0000318"/>
    <property type="project" value="GO_Central"/>
</dbReference>
<dbReference type="GO" id="GO:0007043">
    <property type="term" value="P:cell-cell junction assembly"/>
    <property type="evidence" value="ECO:0000318"/>
    <property type="project" value="GO_Central"/>
</dbReference>
<dbReference type="GO" id="GO:0007156">
    <property type="term" value="P:homophilic cell adhesion via plasma membrane adhesion molecules"/>
    <property type="evidence" value="ECO:0007669"/>
    <property type="project" value="InterPro"/>
</dbReference>
<dbReference type="CDD" id="cd11304">
    <property type="entry name" value="Cadherin_repeat"/>
    <property type="match status" value="5"/>
</dbReference>
<dbReference type="FunFam" id="2.60.40.60:FF:000265">
    <property type="entry name" value="Cadherin 12"/>
    <property type="match status" value="1"/>
</dbReference>
<dbReference type="FunFam" id="2.60.40.60:FF:000297">
    <property type="entry name" value="Cadherin 12"/>
    <property type="match status" value="1"/>
</dbReference>
<dbReference type="FunFam" id="4.10.900.10:FF:000001">
    <property type="entry name" value="Cadherin 2"/>
    <property type="match status" value="1"/>
</dbReference>
<dbReference type="FunFam" id="2.60.40.60:FF:000009">
    <property type="entry name" value="Cadherin 24"/>
    <property type="match status" value="1"/>
</dbReference>
<dbReference type="FunFam" id="2.60.40.60:FF:000012">
    <property type="entry name" value="Cadherin 24"/>
    <property type="match status" value="1"/>
</dbReference>
<dbReference type="FunFam" id="2.60.40.60:FF:000097">
    <property type="entry name" value="cadherin-12 isoform X1"/>
    <property type="match status" value="1"/>
</dbReference>
<dbReference type="Gene3D" id="2.60.40.60">
    <property type="entry name" value="Cadherins"/>
    <property type="match status" value="5"/>
</dbReference>
<dbReference type="Gene3D" id="4.10.900.10">
    <property type="entry name" value="TCF3-CBD (Catenin binding domain)"/>
    <property type="match status" value="1"/>
</dbReference>
<dbReference type="InterPro" id="IPR039808">
    <property type="entry name" value="Cadherin"/>
</dbReference>
<dbReference type="InterPro" id="IPR002126">
    <property type="entry name" value="Cadherin-like_dom"/>
</dbReference>
<dbReference type="InterPro" id="IPR015919">
    <property type="entry name" value="Cadherin-like_sf"/>
</dbReference>
<dbReference type="InterPro" id="IPR020894">
    <property type="entry name" value="Cadherin_CS"/>
</dbReference>
<dbReference type="InterPro" id="IPR000233">
    <property type="entry name" value="Cadherin_Y-type_LIR"/>
</dbReference>
<dbReference type="InterPro" id="IPR027397">
    <property type="entry name" value="Catenin-bd_sf"/>
</dbReference>
<dbReference type="PANTHER" id="PTHR24027:SF96">
    <property type="entry name" value="CADHERIN-12"/>
    <property type="match status" value="1"/>
</dbReference>
<dbReference type="PANTHER" id="PTHR24027">
    <property type="entry name" value="CADHERIN-23"/>
    <property type="match status" value="1"/>
</dbReference>
<dbReference type="Pfam" id="PF01049">
    <property type="entry name" value="CADH_Y-type_LIR"/>
    <property type="match status" value="1"/>
</dbReference>
<dbReference type="Pfam" id="PF00028">
    <property type="entry name" value="Cadherin"/>
    <property type="match status" value="5"/>
</dbReference>
<dbReference type="PRINTS" id="PR00205">
    <property type="entry name" value="CADHERIN"/>
</dbReference>
<dbReference type="SMART" id="SM00112">
    <property type="entry name" value="CA"/>
    <property type="match status" value="5"/>
</dbReference>
<dbReference type="SUPFAM" id="SSF49313">
    <property type="entry name" value="Cadherin-like"/>
    <property type="match status" value="5"/>
</dbReference>
<dbReference type="PROSITE" id="PS00232">
    <property type="entry name" value="CADHERIN_1"/>
    <property type="match status" value="2"/>
</dbReference>
<dbReference type="PROSITE" id="PS50268">
    <property type="entry name" value="CADHERIN_2"/>
    <property type="match status" value="5"/>
</dbReference>
<organism>
    <name type="scientific">Homo sapiens</name>
    <name type="common">Human</name>
    <dbReference type="NCBI Taxonomy" id="9606"/>
    <lineage>
        <taxon>Eukaryota</taxon>
        <taxon>Metazoa</taxon>
        <taxon>Chordata</taxon>
        <taxon>Craniata</taxon>
        <taxon>Vertebrata</taxon>
        <taxon>Euteleostomi</taxon>
        <taxon>Mammalia</taxon>
        <taxon>Eutheria</taxon>
        <taxon>Euarchontoglires</taxon>
        <taxon>Primates</taxon>
        <taxon>Haplorrhini</taxon>
        <taxon>Catarrhini</taxon>
        <taxon>Hominidae</taxon>
        <taxon>Homo</taxon>
    </lineage>
</organism>
<gene>
    <name type="primary">CDH12</name>
</gene>
<evidence type="ECO:0000250" key="1"/>
<evidence type="ECO:0000250" key="2">
    <source>
        <dbReference type="UniProtKB" id="P97326"/>
    </source>
</evidence>
<evidence type="ECO:0000255" key="3"/>
<evidence type="ECO:0000255" key="4">
    <source>
        <dbReference type="PROSITE-ProRule" id="PRU00043"/>
    </source>
</evidence>
<evidence type="ECO:0000269" key="5">
    <source>
    </source>
</evidence>
<evidence type="ECO:0000303" key="6">
    <source>
    </source>
</evidence>
<evidence type="ECO:0000305" key="7"/>
<keyword id="KW-0025">Alternative splicing</keyword>
<keyword id="KW-0106">Calcium</keyword>
<keyword id="KW-0130">Cell adhesion</keyword>
<keyword id="KW-1003">Cell membrane</keyword>
<keyword id="KW-0165">Cleavage on pair of basic residues</keyword>
<keyword id="KW-0325">Glycoprotein</keyword>
<keyword id="KW-0472">Membrane</keyword>
<keyword id="KW-0479">Metal-binding</keyword>
<keyword id="KW-0597">Phosphoprotein</keyword>
<keyword id="KW-1267">Proteomics identification</keyword>
<keyword id="KW-1185">Reference proteome</keyword>
<keyword id="KW-0677">Repeat</keyword>
<keyword id="KW-0732">Signal</keyword>
<keyword id="KW-0812">Transmembrane</keyword>
<keyword id="KW-1133">Transmembrane helix</keyword>
<reference key="1">
    <citation type="journal article" date="1994" name="Cell Adhes. Commun.">
        <title>Cloning of five human cadherins clarifies characteristic features of cadherin extracellular domain and provides further evidence for two structurally different types of cadherin.</title>
        <authorList>
            <person name="Tanihara H."/>
            <person name="Sano K."/>
            <person name="Heimark R.L."/>
            <person name="St John T."/>
            <person name="Suzuki S."/>
        </authorList>
    </citation>
    <scope>NUCLEOTIDE SEQUENCE [MRNA] (ISOFORM 1)</scope>
    <source>
        <tissue>Brain</tissue>
    </source>
</reference>
<reference key="2">
    <citation type="journal article" date="1995" name="Proc. Natl. Acad. Sci. U.S.A.">
        <title>Expressed cadherin pseudogenes are localized to the critical region of the spinal muscular atrophy gene.</title>
        <authorList>
            <person name="Selig S."/>
            <person name="Bruno S."/>
            <person name="Scharf J.M."/>
            <person name="Wang C.H."/>
            <person name="Vitale E."/>
            <person name="Gilliam T.C."/>
            <person name="Kunkel L.M."/>
        </authorList>
    </citation>
    <scope>NUCLEOTIDE SEQUENCE [MRNA] (ISOFORM 1)</scope>
    <scope>VARIANT MET-68</scope>
    <source>
        <tissue>Brain cortex</tissue>
    </source>
</reference>
<reference key="3">
    <citation type="journal article" date="2004" name="Nat. Genet.">
        <title>Complete sequencing and characterization of 21,243 full-length human cDNAs.</title>
        <authorList>
            <person name="Ota T."/>
            <person name="Suzuki Y."/>
            <person name="Nishikawa T."/>
            <person name="Otsuki T."/>
            <person name="Sugiyama T."/>
            <person name="Irie R."/>
            <person name="Wakamatsu A."/>
            <person name="Hayashi K."/>
            <person name="Sato H."/>
            <person name="Nagai K."/>
            <person name="Kimura K."/>
            <person name="Makita H."/>
            <person name="Sekine M."/>
            <person name="Obayashi M."/>
            <person name="Nishi T."/>
            <person name="Shibahara T."/>
            <person name="Tanaka T."/>
            <person name="Ishii S."/>
            <person name="Yamamoto J."/>
            <person name="Saito K."/>
            <person name="Kawai Y."/>
            <person name="Isono Y."/>
            <person name="Nakamura Y."/>
            <person name="Nagahari K."/>
            <person name="Murakami K."/>
            <person name="Yasuda T."/>
            <person name="Iwayanagi T."/>
            <person name="Wagatsuma M."/>
            <person name="Shiratori A."/>
            <person name="Sudo H."/>
            <person name="Hosoiri T."/>
            <person name="Kaku Y."/>
            <person name="Kodaira H."/>
            <person name="Kondo H."/>
            <person name="Sugawara M."/>
            <person name="Takahashi M."/>
            <person name="Kanda K."/>
            <person name="Yokoi T."/>
            <person name="Furuya T."/>
            <person name="Kikkawa E."/>
            <person name="Omura Y."/>
            <person name="Abe K."/>
            <person name="Kamihara K."/>
            <person name="Katsuta N."/>
            <person name="Sato K."/>
            <person name="Tanikawa M."/>
            <person name="Yamazaki M."/>
            <person name="Ninomiya K."/>
            <person name="Ishibashi T."/>
            <person name="Yamashita H."/>
            <person name="Murakawa K."/>
            <person name="Fujimori K."/>
            <person name="Tanai H."/>
            <person name="Kimata M."/>
            <person name="Watanabe M."/>
            <person name="Hiraoka S."/>
            <person name="Chiba Y."/>
            <person name="Ishida S."/>
            <person name="Ono Y."/>
            <person name="Takiguchi S."/>
            <person name="Watanabe S."/>
            <person name="Yosida M."/>
            <person name="Hotuta T."/>
            <person name="Kusano J."/>
            <person name="Kanehori K."/>
            <person name="Takahashi-Fujii A."/>
            <person name="Hara H."/>
            <person name="Tanase T.-O."/>
            <person name="Nomura Y."/>
            <person name="Togiya S."/>
            <person name="Komai F."/>
            <person name="Hara R."/>
            <person name="Takeuchi K."/>
            <person name="Arita M."/>
            <person name="Imose N."/>
            <person name="Musashino K."/>
            <person name="Yuuki H."/>
            <person name="Oshima A."/>
            <person name="Sasaki N."/>
            <person name="Aotsuka S."/>
            <person name="Yoshikawa Y."/>
            <person name="Matsunawa H."/>
            <person name="Ichihara T."/>
            <person name="Shiohata N."/>
            <person name="Sano S."/>
            <person name="Moriya S."/>
            <person name="Momiyama H."/>
            <person name="Satoh N."/>
            <person name="Takami S."/>
            <person name="Terashima Y."/>
            <person name="Suzuki O."/>
            <person name="Nakagawa S."/>
            <person name="Senoh A."/>
            <person name="Mizoguchi H."/>
            <person name="Goto Y."/>
            <person name="Shimizu F."/>
            <person name="Wakebe H."/>
            <person name="Hishigaki H."/>
            <person name="Watanabe T."/>
            <person name="Sugiyama A."/>
            <person name="Takemoto M."/>
            <person name="Kawakami B."/>
            <person name="Yamazaki M."/>
            <person name="Watanabe K."/>
            <person name="Kumagai A."/>
            <person name="Itakura S."/>
            <person name="Fukuzumi Y."/>
            <person name="Fujimori Y."/>
            <person name="Komiyama M."/>
            <person name="Tashiro H."/>
            <person name="Tanigami A."/>
            <person name="Fujiwara T."/>
            <person name="Ono T."/>
            <person name="Yamada K."/>
            <person name="Fujii Y."/>
            <person name="Ozaki K."/>
            <person name="Hirao M."/>
            <person name="Ohmori Y."/>
            <person name="Kawabata A."/>
            <person name="Hikiji T."/>
            <person name="Kobatake N."/>
            <person name="Inagaki H."/>
            <person name="Ikema Y."/>
            <person name="Okamoto S."/>
            <person name="Okitani R."/>
            <person name="Kawakami T."/>
            <person name="Noguchi S."/>
            <person name="Itoh T."/>
            <person name="Shigeta K."/>
            <person name="Senba T."/>
            <person name="Matsumura K."/>
            <person name="Nakajima Y."/>
            <person name="Mizuno T."/>
            <person name="Morinaga M."/>
            <person name="Sasaki M."/>
            <person name="Togashi T."/>
            <person name="Oyama M."/>
            <person name="Hata H."/>
            <person name="Watanabe M."/>
            <person name="Komatsu T."/>
            <person name="Mizushima-Sugano J."/>
            <person name="Satoh T."/>
            <person name="Shirai Y."/>
            <person name="Takahashi Y."/>
            <person name="Nakagawa K."/>
            <person name="Okumura K."/>
            <person name="Nagase T."/>
            <person name="Nomura N."/>
            <person name="Kikuchi H."/>
            <person name="Masuho Y."/>
            <person name="Yamashita R."/>
            <person name="Nakai K."/>
            <person name="Yada T."/>
            <person name="Nakamura Y."/>
            <person name="Ohara O."/>
            <person name="Isogai T."/>
            <person name="Sugano S."/>
        </authorList>
    </citation>
    <scope>NUCLEOTIDE SEQUENCE [LARGE SCALE MRNA] (ISOFORMS 1 AND 2)</scope>
    <source>
        <tissue>Brain</tissue>
        <tissue>Testis</tissue>
    </source>
</reference>
<reference key="4">
    <citation type="journal article" date="2004" name="Nature">
        <title>The DNA sequence and comparative analysis of human chromosome 5.</title>
        <authorList>
            <person name="Schmutz J."/>
            <person name="Martin J."/>
            <person name="Terry A."/>
            <person name="Couronne O."/>
            <person name="Grimwood J."/>
            <person name="Lowry S."/>
            <person name="Gordon L.A."/>
            <person name="Scott D."/>
            <person name="Xie G."/>
            <person name="Huang W."/>
            <person name="Hellsten U."/>
            <person name="Tran-Gyamfi M."/>
            <person name="She X."/>
            <person name="Prabhakar S."/>
            <person name="Aerts A."/>
            <person name="Altherr M."/>
            <person name="Bajorek E."/>
            <person name="Black S."/>
            <person name="Branscomb E."/>
            <person name="Caoile C."/>
            <person name="Challacombe J.F."/>
            <person name="Chan Y.M."/>
            <person name="Denys M."/>
            <person name="Detter J.C."/>
            <person name="Escobar J."/>
            <person name="Flowers D."/>
            <person name="Fotopulos D."/>
            <person name="Glavina T."/>
            <person name="Gomez M."/>
            <person name="Gonzales E."/>
            <person name="Goodstein D."/>
            <person name="Grigoriev I."/>
            <person name="Groza M."/>
            <person name="Hammon N."/>
            <person name="Hawkins T."/>
            <person name="Haydu L."/>
            <person name="Israni S."/>
            <person name="Jett J."/>
            <person name="Kadner K."/>
            <person name="Kimball H."/>
            <person name="Kobayashi A."/>
            <person name="Lopez F."/>
            <person name="Lou Y."/>
            <person name="Martinez D."/>
            <person name="Medina C."/>
            <person name="Morgan J."/>
            <person name="Nandkeshwar R."/>
            <person name="Noonan J.P."/>
            <person name="Pitluck S."/>
            <person name="Pollard M."/>
            <person name="Predki P."/>
            <person name="Priest J."/>
            <person name="Ramirez L."/>
            <person name="Retterer J."/>
            <person name="Rodriguez A."/>
            <person name="Rogers S."/>
            <person name="Salamov A."/>
            <person name="Salazar A."/>
            <person name="Thayer N."/>
            <person name="Tice H."/>
            <person name="Tsai M."/>
            <person name="Ustaszewska A."/>
            <person name="Vo N."/>
            <person name="Wheeler J."/>
            <person name="Wu K."/>
            <person name="Yang J."/>
            <person name="Dickson M."/>
            <person name="Cheng J.-F."/>
            <person name="Eichler E.E."/>
            <person name="Olsen A."/>
            <person name="Pennacchio L.A."/>
            <person name="Rokhsar D.S."/>
            <person name="Richardson P."/>
            <person name="Lucas S.M."/>
            <person name="Myers R.M."/>
            <person name="Rubin E.M."/>
        </authorList>
    </citation>
    <scope>NUCLEOTIDE SEQUENCE [LARGE SCALE GENOMIC DNA]</scope>
</reference>
<reference key="5">
    <citation type="submission" date="2005-07" db="EMBL/GenBank/DDBJ databases">
        <authorList>
            <person name="Mural R.J."/>
            <person name="Istrail S."/>
            <person name="Sutton G.G."/>
            <person name="Florea L."/>
            <person name="Halpern A.L."/>
            <person name="Mobarry C.M."/>
            <person name="Lippert R."/>
            <person name="Walenz B."/>
            <person name="Shatkay H."/>
            <person name="Dew I."/>
            <person name="Miller J.R."/>
            <person name="Flanigan M.J."/>
            <person name="Edwards N.J."/>
            <person name="Bolanos R."/>
            <person name="Fasulo D."/>
            <person name="Halldorsson B.V."/>
            <person name="Hannenhalli S."/>
            <person name="Turner R."/>
            <person name="Yooseph S."/>
            <person name="Lu F."/>
            <person name="Nusskern D.R."/>
            <person name="Shue B.C."/>
            <person name="Zheng X.H."/>
            <person name="Zhong F."/>
            <person name="Delcher A.L."/>
            <person name="Huson D.H."/>
            <person name="Kravitz S.A."/>
            <person name="Mouchard L."/>
            <person name="Reinert K."/>
            <person name="Remington K.A."/>
            <person name="Clark A.G."/>
            <person name="Waterman M.S."/>
            <person name="Eichler E.E."/>
            <person name="Adams M.D."/>
            <person name="Hunkapiller M.W."/>
            <person name="Myers E.W."/>
            <person name="Venter J.C."/>
        </authorList>
    </citation>
    <scope>NUCLEOTIDE SEQUENCE [LARGE SCALE GENOMIC DNA]</scope>
</reference>
<reference key="6">
    <citation type="journal article" date="2004" name="Genome Res.">
        <title>The status, quality, and expansion of the NIH full-length cDNA project: the Mammalian Gene Collection (MGC).</title>
        <authorList>
            <consortium name="The MGC Project Team"/>
        </authorList>
    </citation>
    <scope>NUCLEOTIDE SEQUENCE [LARGE SCALE MRNA] (ISOFORM 1)</scope>
    <source>
        <tissue>Brain</tissue>
    </source>
</reference>
<name>CAD12_HUMAN</name>